<organism>
    <name type="scientific">Radianthus crispa</name>
    <name type="common">Leathery sea anemone</name>
    <name type="synonym">Heteractis crispa</name>
    <dbReference type="NCBI Taxonomy" id="3122430"/>
    <lineage>
        <taxon>Eukaryota</taxon>
        <taxon>Metazoa</taxon>
        <taxon>Cnidaria</taxon>
        <taxon>Anthozoa</taxon>
        <taxon>Hexacorallia</taxon>
        <taxon>Actiniaria</taxon>
        <taxon>Stichodactylidae</taxon>
        <taxon>Radianthus</taxon>
    </lineage>
</organism>
<name>VKT2C_RADCR</name>
<sequence>GSICLEPKVVGPCTAYFRRFYFDSETGKCTPFIYGGCEGNGNNFETLRACRAICRA</sequence>
<keyword id="KW-0903">Direct protein sequencing</keyword>
<keyword id="KW-1015">Disulfide bond</keyword>
<keyword id="KW-0872">Ion channel impairing toxin</keyword>
<keyword id="KW-0166">Nematocyst</keyword>
<keyword id="KW-0528">Neurotoxin</keyword>
<keyword id="KW-0646">Protease inhibitor</keyword>
<keyword id="KW-0964">Secreted</keyword>
<keyword id="KW-0722">Serine protease inhibitor</keyword>
<keyword id="KW-0800">Toxin</keyword>
<accession>C0HJF4</accession>
<proteinExistence type="evidence at protein level"/>
<dbReference type="SMR" id="C0HJF4"/>
<dbReference type="GO" id="GO:0005615">
    <property type="term" value="C:extracellular space"/>
    <property type="evidence" value="ECO:0007669"/>
    <property type="project" value="TreeGrafter"/>
</dbReference>
<dbReference type="GO" id="GO:0042151">
    <property type="term" value="C:nematocyst"/>
    <property type="evidence" value="ECO:0007669"/>
    <property type="project" value="UniProtKB-SubCell"/>
</dbReference>
<dbReference type="GO" id="GO:0099106">
    <property type="term" value="F:ion channel regulator activity"/>
    <property type="evidence" value="ECO:0007669"/>
    <property type="project" value="UniProtKB-KW"/>
</dbReference>
<dbReference type="GO" id="GO:0004867">
    <property type="term" value="F:serine-type endopeptidase inhibitor activity"/>
    <property type="evidence" value="ECO:0007669"/>
    <property type="project" value="UniProtKB-KW"/>
</dbReference>
<dbReference type="GO" id="GO:0090729">
    <property type="term" value="F:toxin activity"/>
    <property type="evidence" value="ECO:0007669"/>
    <property type="project" value="UniProtKB-KW"/>
</dbReference>
<dbReference type="CDD" id="cd22618">
    <property type="entry name" value="Kunitz_SHPI"/>
    <property type="match status" value="1"/>
</dbReference>
<dbReference type="FunFam" id="4.10.410.10:FF:000021">
    <property type="entry name" value="Serine protease inhibitor, putative"/>
    <property type="match status" value="1"/>
</dbReference>
<dbReference type="Gene3D" id="4.10.410.10">
    <property type="entry name" value="Pancreatic trypsin inhibitor Kunitz domain"/>
    <property type="match status" value="1"/>
</dbReference>
<dbReference type="InterPro" id="IPR002223">
    <property type="entry name" value="Kunitz_BPTI"/>
</dbReference>
<dbReference type="InterPro" id="IPR036880">
    <property type="entry name" value="Kunitz_BPTI_sf"/>
</dbReference>
<dbReference type="InterPro" id="IPR020901">
    <property type="entry name" value="Prtase_inh_Kunz-CS"/>
</dbReference>
<dbReference type="InterPro" id="IPR050098">
    <property type="entry name" value="TFPI/VKTCI-like"/>
</dbReference>
<dbReference type="PANTHER" id="PTHR10083:SF374">
    <property type="entry name" value="BPTI_KUNITZ INHIBITOR DOMAIN-CONTAINING PROTEIN"/>
    <property type="match status" value="1"/>
</dbReference>
<dbReference type="PANTHER" id="PTHR10083">
    <property type="entry name" value="KUNITZ-TYPE PROTEASE INHIBITOR-RELATED"/>
    <property type="match status" value="1"/>
</dbReference>
<dbReference type="Pfam" id="PF00014">
    <property type="entry name" value="Kunitz_BPTI"/>
    <property type="match status" value="1"/>
</dbReference>
<dbReference type="PRINTS" id="PR00759">
    <property type="entry name" value="BASICPTASE"/>
</dbReference>
<dbReference type="SMART" id="SM00131">
    <property type="entry name" value="KU"/>
    <property type="match status" value="1"/>
</dbReference>
<dbReference type="SUPFAM" id="SSF57362">
    <property type="entry name" value="BPTI-like"/>
    <property type="match status" value="1"/>
</dbReference>
<dbReference type="PROSITE" id="PS00280">
    <property type="entry name" value="BPTI_KUNITZ_1"/>
    <property type="match status" value="1"/>
</dbReference>
<dbReference type="PROSITE" id="PS50279">
    <property type="entry name" value="BPTI_KUNITZ_2"/>
    <property type="match status" value="1"/>
</dbReference>
<evidence type="ECO:0000250" key="1">
    <source>
        <dbReference type="UniProtKB" id="B2G331"/>
    </source>
</evidence>
<evidence type="ECO:0000250" key="2">
    <source>
        <dbReference type="UniProtKB" id="P31713"/>
    </source>
</evidence>
<evidence type="ECO:0000255" key="3">
    <source>
        <dbReference type="PROSITE-ProRule" id="PRU00031"/>
    </source>
</evidence>
<evidence type="ECO:0000269" key="4">
    <source>
    </source>
</evidence>
<evidence type="ECO:0000269" key="5">
    <source ref="2"/>
</evidence>
<evidence type="ECO:0000303" key="6">
    <source>
    </source>
</evidence>
<evidence type="ECO:0000305" key="7"/>
<comment type="function">
    <text evidence="1 4 5">This protease inhibitor shows two different activities, it inhibits both the capsaicin receptor TRPV1 and serine proteases. It partially (max 50%) and reversibly inhibits mammalian TRPV1, a non-selective cation channel expressed by sensory neurons of the pain pathway (Ref.2 (By similarity)). The second activity is a weak inhibition of trypsin and chymotrypsin activity (Ki=0.9 uM and Ki=4.5 uM, respectively) (PubMed:20208578). In vivo, shows analgesic effects on mammals (PubMed:20208578).</text>
</comment>
<comment type="subcellular location">
    <subcellularLocation>
        <location evidence="4">Secreted</location>
    </subcellularLocation>
    <subcellularLocation>
        <location evidence="4">Nematocyst</location>
    </subcellularLocation>
</comment>
<comment type="mass spectrometry"/>
<comment type="miscellaneous">
    <text evidence="4">Negative results: intravenous doses (up to 1 mg/kg) has no toxic effect and generated no behavioral disorders in mice.</text>
</comment>
<comment type="miscellaneous">
    <text evidence="7">A synonymy between H.magnifica and R.crispa is controversial.</text>
</comment>
<comment type="similarity">
    <text evidence="7">Belongs to the venom Kunitz-type family. Sea anemone type 2 potassium channel toxin subfamily.</text>
</comment>
<protein>
    <recommendedName>
        <fullName evidence="7">TauPI-stichotoxin-Hcr2c</fullName>
        <shortName evidence="7">TauPI-SHTX-Hcr2c</shortName>
    </recommendedName>
    <alternativeName>
        <fullName evidence="6">Analgesic polypeptide HC2</fullName>
        <shortName evidence="6">APHC2</shortName>
    </alternativeName>
</protein>
<reference key="1">
    <citation type="journal article" date="2009" name="Bioorg. Khim.">
        <title>New polypeptide components from the Heteractis crispa sea anemone with analgesic activity.</title>
        <authorList>
            <person name="Kozlov S.A."/>
            <person name="Andreev Y.A."/>
            <person name="Murashev A.N."/>
            <person name="Skobtsov D.I."/>
            <person name="D'iachenko I.A."/>
            <person name="Grishin E.V."/>
        </authorList>
    </citation>
    <scope>PROTEIN SEQUENCE</scope>
    <scope>FUNCTION</scope>
    <scope>SUBCELLULAR LOCATION</scope>
    <scope>MASS SPECTROMETRY</scope>
    <source>
        <tissue>Nematoblast</tissue>
    </source>
</reference>
<reference key="2">
    <citation type="submission" date="2013-10" db="UniProtKB">
        <title>Sea anemone peptides modulate TRPV1 activity and produce analgesia without hyperthermic effect.</title>
        <authorList>
            <person name="Andreev Y.A."/>
            <person name="Mosharova I.V."/>
            <person name="Kozlov S.A."/>
            <person name="Korolkova Y.V."/>
            <person name="Grishin E.V."/>
        </authorList>
    </citation>
    <scope>FUNCTION</scope>
</reference>
<feature type="chain" id="PRO_0000424699" description="TauPI-stichotoxin-Hcr2c" evidence="4">
    <location>
        <begin position="1"/>
        <end position="56"/>
    </location>
</feature>
<feature type="domain" description="BPTI/Kunitz inhibitor" evidence="3">
    <location>
        <begin position="4"/>
        <end position="54"/>
    </location>
</feature>
<feature type="site" description="Reactive bond for trypsin" evidence="2">
    <location>
        <begin position="14"/>
        <end position="15"/>
    </location>
</feature>
<feature type="disulfide bond" evidence="2">
    <location>
        <begin position="4"/>
        <end position="54"/>
    </location>
</feature>
<feature type="disulfide bond" evidence="2">
    <location>
        <begin position="13"/>
        <end position="37"/>
    </location>
</feature>
<feature type="disulfide bond" evidence="2">
    <location>
        <begin position="29"/>
        <end position="50"/>
    </location>
</feature>